<keyword id="KW-1185">Reference proteome</keyword>
<keyword id="KW-0687">Ribonucleoprotein</keyword>
<keyword id="KW-0689">Ribosomal protein</keyword>
<name>RS10_LEUCK</name>
<protein>
    <recommendedName>
        <fullName evidence="1">Small ribosomal subunit protein uS10</fullName>
    </recommendedName>
    <alternativeName>
        <fullName evidence="2">30S ribosomal protein S10</fullName>
    </alternativeName>
</protein>
<proteinExistence type="inferred from homology"/>
<accession>B1MW15</accession>
<organism>
    <name type="scientific">Leuconostoc citreum (strain KM20)</name>
    <dbReference type="NCBI Taxonomy" id="349519"/>
    <lineage>
        <taxon>Bacteria</taxon>
        <taxon>Bacillati</taxon>
        <taxon>Bacillota</taxon>
        <taxon>Bacilli</taxon>
        <taxon>Lactobacillales</taxon>
        <taxon>Lactobacillaceae</taxon>
        <taxon>Leuconostoc</taxon>
    </lineage>
</organism>
<comment type="function">
    <text evidence="1">Involved in the binding of tRNA to the ribosomes.</text>
</comment>
<comment type="subunit">
    <text evidence="1">Part of the 30S ribosomal subunit.</text>
</comment>
<comment type="similarity">
    <text evidence="1">Belongs to the universal ribosomal protein uS10 family.</text>
</comment>
<reference key="1">
    <citation type="journal article" date="2008" name="J. Bacteriol.">
        <title>Complete genome sequence of Leuconostoc citreum KM20.</title>
        <authorList>
            <person name="Kim J.F."/>
            <person name="Jeong H."/>
            <person name="Lee J.-S."/>
            <person name="Choi S.-H."/>
            <person name="Ha M."/>
            <person name="Hur C.-G."/>
            <person name="Kim J.-S."/>
            <person name="Lee S."/>
            <person name="Park H.-S."/>
            <person name="Park Y.-H."/>
            <person name="Oh T.K."/>
        </authorList>
    </citation>
    <scope>NUCLEOTIDE SEQUENCE [LARGE SCALE GENOMIC DNA]</scope>
    <source>
        <strain>KM20</strain>
    </source>
</reference>
<dbReference type="EMBL" id="DQ489736">
    <property type="protein sequence ID" value="ACA83419.1"/>
    <property type="molecule type" value="Genomic_DNA"/>
</dbReference>
<dbReference type="RefSeq" id="WP_002816040.1">
    <property type="nucleotide sequence ID" value="NC_010471.1"/>
</dbReference>
<dbReference type="SMR" id="B1MW15"/>
<dbReference type="STRING" id="349519.LCK_01596"/>
<dbReference type="GeneID" id="97504982"/>
<dbReference type="KEGG" id="lci:LCK_01596"/>
<dbReference type="eggNOG" id="COG0051">
    <property type="taxonomic scope" value="Bacteria"/>
</dbReference>
<dbReference type="HOGENOM" id="CLU_122625_1_3_9"/>
<dbReference type="OrthoDB" id="9804464at2"/>
<dbReference type="Proteomes" id="UP000002166">
    <property type="component" value="Chromosome"/>
</dbReference>
<dbReference type="GO" id="GO:1990904">
    <property type="term" value="C:ribonucleoprotein complex"/>
    <property type="evidence" value="ECO:0007669"/>
    <property type="project" value="UniProtKB-KW"/>
</dbReference>
<dbReference type="GO" id="GO:0005840">
    <property type="term" value="C:ribosome"/>
    <property type="evidence" value="ECO:0007669"/>
    <property type="project" value="UniProtKB-KW"/>
</dbReference>
<dbReference type="GO" id="GO:0003735">
    <property type="term" value="F:structural constituent of ribosome"/>
    <property type="evidence" value="ECO:0007669"/>
    <property type="project" value="InterPro"/>
</dbReference>
<dbReference type="GO" id="GO:0000049">
    <property type="term" value="F:tRNA binding"/>
    <property type="evidence" value="ECO:0007669"/>
    <property type="project" value="UniProtKB-UniRule"/>
</dbReference>
<dbReference type="GO" id="GO:0006412">
    <property type="term" value="P:translation"/>
    <property type="evidence" value="ECO:0007669"/>
    <property type="project" value="UniProtKB-UniRule"/>
</dbReference>
<dbReference type="FunFam" id="3.30.70.600:FF:000001">
    <property type="entry name" value="30S ribosomal protein S10"/>
    <property type="match status" value="1"/>
</dbReference>
<dbReference type="Gene3D" id="3.30.70.600">
    <property type="entry name" value="Ribosomal protein S10 domain"/>
    <property type="match status" value="1"/>
</dbReference>
<dbReference type="HAMAP" id="MF_00508">
    <property type="entry name" value="Ribosomal_uS10"/>
    <property type="match status" value="1"/>
</dbReference>
<dbReference type="InterPro" id="IPR001848">
    <property type="entry name" value="Ribosomal_uS10"/>
</dbReference>
<dbReference type="InterPro" id="IPR018268">
    <property type="entry name" value="Ribosomal_uS10_CS"/>
</dbReference>
<dbReference type="InterPro" id="IPR027486">
    <property type="entry name" value="Ribosomal_uS10_dom"/>
</dbReference>
<dbReference type="InterPro" id="IPR036838">
    <property type="entry name" value="Ribosomal_uS10_dom_sf"/>
</dbReference>
<dbReference type="NCBIfam" id="NF001861">
    <property type="entry name" value="PRK00596.1"/>
    <property type="match status" value="1"/>
</dbReference>
<dbReference type="NCBIfam" id="TIGR01049">
    <property type="entry name" value="rpsJ_bact"/>
    <property type="match status" value="1"/>
</dbReference>
<dbReference type="PANTHER" id="PTHR11700">
    <property type="entry name" value="30S RIBOSOMAL PROTEIN S10 FAMILY MEMBER"/>
    <property type="match status" value="1"/>
</dbReference>
<dbReference type="Pfam" id="PF00338">
    <property type="entry name" value="Ribosomal_S10"/>
    <property type="match status" value="1"/>
</dbReference>
<dbReference type="PRINTS" id="PR00971">
    <property type="entry name" value="RIBOSOMALS10"/>
</dbReference>
<dbReference type="SMART" id="SM01403">
    <property type="entry name" value="Ribosomal_S10"/>
    <property type="match status" value="1"/>
</dbReference>
<dbReference type="SUPFAM" id="SSF54999">
    <property type="entry name" value="Ribosomal protein S10"/>
    <property type="match status" value="1"/>
</dbReference>
<dbReference type="PROSITE" id="PS00361">
    <property type="entry name" value="RIBOSOMAL_S10"/>
    <property type="match status" value="1"/>
</dbReference>
<feature type="chain" id="PRO_1000127147" description="Small ribosomal subunit protein uS10">
    <location>
        <begin position="1"/>
        <end position="102"/>
    </location>
</feature>
<gene>
    <name evidence="1" type="primary">rpsJ</name>
    <name type="ordered locus">LCK_01596</name>
</gene>
<evidence type="ECO:0000255" key="1">
    <source>
        <dbReference type="HAMAP-Rule" id="MF_00508"/>
    </source>
</evidence>
<evidence type="ECO:0000305" key="2"/>
<sequence>MAQKKIRIRLKAYEHRILDQSAEKIVETAKRTGAEIAGPIPLPTERTLYTILRSPHKHKDSREQFEMRTHKRLIDIVNPTDKTVDALRKLELPSGVAIEIKL</sequence>